<protein>
    <recommendedName>
        <fullName evidence="1">Large ribosomal subunit protein bL20</fullName>
    </recommendedName>
    <alternativeName>
        <fullName evidence="2">50S ribosomal protein L20</fullName>
    </alternativeName>
</protein>
<dbReference type="EMBL" id="CP001275">
    <property type="protein sequence ID" value="ACM04823.1"/>
    <property type="molecule type" value="Genomic_DNA"/>
</dbReference>
<dbReference type="RefSeq" id="WP_012642214.1">
    <property type="nucleotide sequence ID" value="NC_011959.1"/>
</dbReference>
<dbReference type="SMR" id="B9KZB5"/>
<dbReference type="STRING" id="309801.trd_0829"/>
<dbReference type="KEGG" id="tro:trd_0829"/>
<dbReference type="eggNOG" id="COG0292">
    <property type="taxonomic scope" value="Bacteria"/>
</dbReference>
<dbReference type="HOGENOM" id="CLU_123265_0_1_0"/>
<dbReference type="OrthoDB" id="9808966at2"/>
<dbReference type="Proteomes" id="UP000000447">
    <property type="component" value="Chromosome"/>
</dbReference>
<dbReference type="GO" id="GO:1990904">
    <property type="term" value="C:ribonucleoprotein complex"/>
    <property type="evidence" value="ECO:0007669"/>
    <property type="project" value="UniProtKB-KW"/>
</dbReference>
<dbReference type="GO" id="GO:0005840">
    <property type="term" value="C:ribosome"/>
    <property type="evidence" value="ECO:0007669"/>
    <property type="project" value="UniProtKB-KW"/>
</dbReference>
<dbReference type="GO" id="GO:0019843">
    <property type="term" value="F:rRNA binding"/>
    <property type="evidence" value="ECO:0007669"/>
    <property type="project" value="UniProtKB-UniRule"/>
</dbReference>
<dbReference type="GO" id="GO:0003735">
    <property type="term" value="F:structural constituent of ribosome"/>
    <property type="evidence" value="ECO:0007669"/>
    <property type="project" value="InterPro"/>
</dbReference>
<dbReference type="GO" id="GO:0000027">
    <property type="term" value="P:ribosomal large subunit assembly"/>
    <property type="evidence" value="ECO:0007669"/>
    <property type="project" value="UniProtKB-UniRule"/>
</dbReference>
<dbReference type="GO" id="GO:0006412">
    <property type="term" value="P:translation"/>
    <property type="evidence" value="ECO:0007669"/>
    <property type="project" value="InterPro"/>
</dbReference>
<dbReference type="CDD" id="cd07026">
    <property type="entry name" value="Ribosomal_L20"/>
    <property type="match status" value="1"/>
</dbReference>
<dbReference type="FunFam" id="1.10.1900.20:FF:000001">
    <property type="entry name" value="50S ribosomal protein L20"/>
    <property type="match status" value="1"/>
</dbReference>
<dbReference type="Gene3D" id="6.10.160.10">
    <property type="match status" value="1"/>
</dbReference>
<dbReference type="Gene3D" id="1.10.1900.20">
    <property type="entry name" value="Ribosomal protein L20"/>
    <property type="match status" value="1"/>
</dbReference>
<dbReference type="HAMAP" id="MF_00382">
    <property type="entry name" value="Ribosomal_bL20"/>
    <property type="match status" value="1"/>
</dbReference>
<dbReference type="InterPro" id="IPR005813">
    <property type="entry name" value="Ribosomal_bL20"/>
</dbReference>
<dbReference type="InterPro" id="IPR049946">
    <property type="entry name" value="RIBOSOMAL_L20_CS"/>
</dbReference>
<dbReference type="InterPro" id="IPR035566">
    <property type="entry name" value="Ribosomal_protein_bL20_C"/>
</dbReference>
<dbReference type="NCBIfam" id="TIGR01032">
    <property type="entry name" value="rplT_bact"/>
    <property type="match status" value="1"/>
</dbReference>
<dbReference type="PANTHER" id="PTHR10986">
    <property type="entry name" value="39S RIBOSOMAL PROTEIN L20"/>
    <property type="match status" value="1"/>
</dbReference>
<dbReference type="Pfam" id="PF00453">
    <property type="entry name" value="Ribosomal_L20"/>
    <property type="match status" value="1"/>
</dbReference>
<dbReference type="PRINTS" id="PR00062">
    <property type="entry name" value="RIBOSOMALL20"/>
</dbReference>
<dbReference type="SUPFAM" id="SSF74731">
    <property type="entry name" value="Ribosomal protein L20"/>
    <property type="match status" value="1"/>
</dbReference>
<dbReference type="PROSITE" id="PS00937">
    <property type="entry name" value="RIBOSOMAL_L20"/>
    <property type="match status" value="1"/>
</dbReference>
<keyword id="KW-1185">Reference proteome</keyword>
<keyword id="KW-0687">Ribonucleoprotein</keyword>
<keyword id="KW-0689">Ribosomal protein</keyword>
<keyword id="KW-0694">RNA-binding</keyword>
<keyword id="KW-0699">rRNA-binding</keyword>
<organism>
    <name type="scientific">Thermomicrobium roseum (strain ATCC 27502 / DSM 5159 / P-2)</name>
    <dbReference type="NCBI Taxonomy" id="309801"/>
    <lineage>
        <taxon>Bacteria</taxon>
        <taxon>Pseudomonadati</taxon>
        <taxon>Thermomicrobiota</taxon>
        <taxon>Thermomicrobia</taxon>
        <taxon>Thermomicrobiales</taxon>
        <taxon>Thermomicrobiaceae</taxon>
        <taxon>Thermomicrobium</taxon>
    </lineage>
</organism>
<evidence type="ECO:0000255" key="1">
    <source>
        <dbReference type="HAMAP-Rule" id="MF_00382"/>
    </source>
</evidence>
<evidence type="ECO:0000305" key="2"/>
<reference key="1">
    <citation type="journal article" date="2009" name="PLoS ONE">
        <title>Complete genome sequence of the aerobic CO-oxidizing thermophile Thermomicrobium roseum.</title>
        <authorList>
            <person name="Wu D."/>
            <person name="Raymond J."/>
            <person name="Wu M."/>
            <person name="Chatterji S."/>
            <person name="Ren Q."/>
            <person name="Graham J.E."/>
            <person name="Bryant D.A."/>
            <person name="Robb F."/>
            <person name="Colman A."/>
            <person name="Tallon L.J."/>
            <person name="Badger J.H."/>
            <person name="Madupu R."/>
            <person name="Ward N.L."/>
            <person name="Eisen J.A."/>
        </authorList>
    </citation>
    <scope>NUCLEOTIDE SEQUENCE [LARGE SCALE GENOMIC DNA]</scope>
    <source>
        <strain>ATCC 27502 / DSM 5159 / P-2</strain>
    </source>
</reference>
<comment type="function">
    <text evidence="1">Binds directly to 23S ribosomal RNA and is necessary for the in vitro assembly process of the 50S ribosomal subunit. It is not involved in the protein synthesizing functions of that subunit.</text>
</comment>
<comment type="similarity">
    <text evidence="1">Belongs to the bacterial ribosomal protein bL20 family.</text>
</comment>
<proteinExistence type="inferred from homology"/>
<name>RL20_THERP</name>
<feature type="chain" id="PRO_1000134231" description="Large ribosomal subunit protein bL20">
    <location>
        <begin position="1"/>
        <end position="117"/>
    </location>
</feature>
<gene>
    <name evidence="1" type="primary">rplT</name>
    <name type="ordered locus">trd_0829</name>
</gene>
<sequence length="117" mass="13839">MVRVKRGVTKHRRHKKILELAKGYQLGRSKLYRHANEAVLKALRYQYRDRRARKRDFRRLWIIRINAAARQHGMPYRDFIHGLKQAGVEVDRKMLADLAVHDPSAFGQLVEVARRAL</sequence>
<accession>B9KZB5</accession>